<gene>
    <name type="primary">Segment-8</name>
</gene>
<accession>P23065</accession>
<proteinExistence type="evidence at protein level"/>
<organismHost>
    <name type="scientific">Antilocapra americana</name>
    <name type="common">Pronghorn</name>
    <dbReference type="NCBI Taxonomy" id="9891"/>
</organismHost>
<organismHost>
    <name type="scientific">Bos taurus</name>
    <name type="common">Bovine</name>
    <dbReference type="NCBI Taxonomy" id="9913"/>
</organismHost>
<organismHost>
    <name type="scientific">Capra hircus</name>
    <name type="common">Goat</name>
    <dbReference type="NCBI Taxonomy" id="9925"/>
</organismHost>
<organismHost>
    <name type="scientific">Culicoides variipennis</name>
    <name type="common">Biting midge</name>
    <dbReference type="NCBI Taxonomy" id="46212"/>
</organismHost>
<organismHost>
    <name type="scientific">Ovis aries</name>
    <name type="common">Sheep</name>
    <dbReference type="NCBI Taxonomy" id="9940"/>
</organismHost>
<name>VNS2_BTV10</name>
<keyword id="KW-0002">3D-structure</keyword>
<keyword id="KW-1185">Reference proteome</keyword>
<keyword id="KW-0694">RNA-binding</keyword>
<feature type="chain" id="PRO_0000222675" description="Non-structural protein NS2">
    <location>
        <begin position="1"/>
        <end position="357"/>
    </location>
</feature>
<feature type="region of interest" description="Disordered" evidence="1">
    <location>
        <begin position="169"/>
        <end position="191"/>
    </location>
</feature>
<feature type="region of interest" description="Disordered" evidence="1">
    <location>
        <begin position="229"/>
        <end position="266"/>
    </location>
</feature>
<feature type="compositionally biased region" description="Basic and acidic residues" evidence="1">
    <location>
        <begin position="233"/>
        <end position="249"/>
    </location>
</feature>
<feature type="compositionally biased region" description="Acidic residues" evidence="1">
    <location>
        <begin position="250"/>
        <end position="260"/>
    </location>
</feature>
<feature type="strand" evidence="3">
    <location>
        <begin position="10"/>
        <end position="15"/>
    </location>
</feature>
<feature type="helix" evidence="3">
    <location>
        <begin position="22"/>
        <end position="29"/>
    </location>
</feature>
<feature type="strand" evidence="3">
    <location>
        <begin position="33"/>
        <end position="42"/>
    </location>
</feature>
<feature type="strand" evidence="3">
    <location>
        <begin position="44"/>
        <end position="50"/>
    </location>
</feature>
<feature type="strand" evidence="3">
    <location>
        <begin position="56"/>
        <end position="59"/>
    </location>
</feature>
<feature type="strand" evidence="3">
    <location>
        <begin position="61"/>
        <end position="70"/>
    </location>
</feature>
<feature type="strand" evidence="3">
    <location>
        <begin position="73"/>
        <end position="79"/>
    </location>
</feature>
<feature type="strand" evidence="3">
    <location>
        <begin position="84"/>
        <end position="89"/>
    </location>
</feature>
<feature type="strand" evidence="3">
    <location>
        <begin position="97"/>
        <end position="100"/>
    </location>
</feature>
<feature type="strand" evidence="3">
    <location>
        <begin position="102"/>
        <end position="110"/>
    </location>
</feature>
<feature type="strand" evidence="3">
    <location>
        <begin position="113"/>
        <end position="123"/>
    </location>
</feature>
<feature type="strand" evidence="3">
    <location>
        <begin position="133"/>
        <end position="135"/>
    </location>
</feature>
<feature type="helix" evidence="3">
    <location>
        <begin position="138"/>
        <end position="140"/>
    </location>
</feature>
<feature type="helix" evidence="3">
    <location>
        <begin position="154"/>
        <end position="157"/>
    </location>
</feature>
<organism>
    <name type="scientific">Bluetongue virus 10 (isolate USA)</name>
    <name type="common">BTV 10</name>
    <dbReference type="NCBI Taxonomy" id="10900"/>
    <lineage>
        <taxon>Viruses</taxon>
        <taxon>Riboviria</taxon>
        <taxon>Orthornavirae</taxon>
        <taxon>Duplornaviricota</taxon>
        <taxon>Resentoviricetes</taxon>
        <taxon>Reovirales</taxon>
        <taxon>Sedoreoviridae</taxon>
        <taxon>Orbivirus</taxon>
        <taxon>Bluetongue virus</taxon>
    </lineage>
</organism>
<protein>
    <recommendedName>
        <fullName>Non-structural protein NS2</fullName>
    </recommendedName>
</protein>
<comment type="function">
    <text>Single-stranded RNA-binding protein.</text>
</comment>
<comment type="similarity">
    <text evidence="2">Belongs to the orbivirus non-structural protein NS2 family.</text>
</comment>
<evidence type="ECO:0000256" key="1">
    <source>
        <dbReference type="SAM" id="MobiDB-lite"/>
    </source>
</evidence>
<evidence type="ECO:0000305" key="2"/>
<evidence type="ECO:0007829" key="3">
    <source>
        <dbReference type="PDB" id="1UTY"/>
    </source>
</evidence>
<sequence length="357" mass="40999">MEQKQRRFTKNIFVLDVTAKTLCGAIAKLSSQPYCQIKIGRVVAFKPVKNPEPKGYVLNVPGPGAYRIQDGQDIISLMLTPHGVEATTERWEEWKFEGVSVTPMATRVQYNGVMVDAEIKYCKGMGIVQPYMRNDFDRNEMPDLPGVMRSNYDIRELRQKIKNERESAPRLQVHSVAPREESRWMDDDEAKVDDEAKEIVPGTSGLEKLREARSNVFKEVEAVINWNLDERDEGDRDERGDEEQVKTLSDDDDQGEDASDDEHPKTHITKEYIEKVAKQIKLKDERFMSLSSAMPQASGGFDRMIVTKKLKWQNVPLYCFDESLKRYELQCVGACERVAFVSKDMSLIICRSAFRRL</sequence>
<reference key="1">
    <citation type="journal article" date="1989" name="J. Gen. Virol.">
        <title>Completion of the sequence of bluetongue virus serotype 10 by the characterization of a structural protein, VP6, and a non-structural protein, NS2.</title>
        <authorList>
            <person name="Fukusho A."/>
            <person name="Yu Y."/>
            <person name="Yamaguchi S."/>
            <person name="Roy P."/>
        </authorList>
    </citation>
    <scope>NUCLEOTIDE SEQUENCE [GENOMIC RNA]</scope>
</reference>
<dbReference type="EMBL" id="D00500">
    <property type="protein sequence ID" value="BAA00392.1"/>
    <property type="molecule type" value="Genomic_RNA"/>
</dbReference>
<dbReference type="PIR" id="A32400">
    <property type="entry name" value="MNXRC3"/>
</dbReference>
<dbReference type="PDB" id="1UTY">
    <property type="method" value="X-ray"/>
    <property type="resolution" value="2.40 A"/>
    <property type="chains" value="A/B=1-177"/>
</dbReference>
<dbReference type="PDBsum" id="1UTY"/>
<dbReference type="SMR" id="P23065"/>
<dbReference type="KEGG" id="vg:2943149"/>
<dbReference type="EvolutionaryTrace" id="P23065"/>
<dbReference type="Proteomes" id="UP000007662">
    <property type="component" value="Genome"/>
</dbReference>
<dbReference type="GO" id="GO:0003723">
    <property type="term" value="F:RNA binding"/>
    <property type="evidence" value="ECO:0007669"/>
    <property type="project" value="UniProtKB-KW"/>
</dbReference>
<dbReference type="InterPro" id="IPR007602">
    <property type="entry name" value="BTV_NS2"/>
</dbReference>
<dbReference type="InterPro" id="IPR037194">
    <property type="entry name" value="NS2_N"/>
</dbReference>
<dbReference type="Pfam" id="PF04514">
    <property type="entry name" value="BTV_NS2"/>
    <property type="match status" value="1"/>
</dbReference>
<dbReference type="SUPFAM" id="SSF110132">
    <property type="entry name" value="BTV NS2-like ssRNA-binding domain"/>
    <property type="match status" value="1"/>
</dbReference>